<name>COXX_GEOSL</name>
<protein>
    <recommendedName>
        <fullName evidence="1">Protoheme IX farnesyltransferase</fullName>
        <ecNumber evidence="1">2.5.1.141</ecNumber>
    </recommendedName>
    <alternativeName>
        <fullName evidence="1">Heme B farnesyltransferase</fullName>
    </alternativeName>
    <alternativeName>
        <fullName evidence="1">Heme O synthase</fullName>
    </alternativeName>
</protein>
<reference key="1">
    <citation type="journal article" date="2003" name="Science">
        <title>Genome of Geobacter sulfurreducens: metal reduction in subsurface environments.</title>
        <authorList>
            <person name="Methe B.A."/>
            <person name="Nelson K.E."/>
            <person name="Eisen J.A."/>
            <person name="Paulsen I.T."/>
            <person name="Nelson W.C."/>
            <person name="Heidelberg J.F."/>
            <person name="Wu D."/>
            <person name="Wu M."/>
            <person name="Ward N.L."/>
            <person name="Beanan M.J."/>
            <person name="Dodson R.J."/>
            <person name="Madupu R."/>
            <person name="Brinkac L.M."/>
            <person name="Daugherty S.C."/>
            <person name="DeBoy R.T."/>
            <person name="Durkin A.S."/>
            <person name="Gwinn M.L."/>
            <person name="Kolonay J.F."/>
            <person name="Sullivan S.A."/>
            <person name="Haft D.H."/>
            <person name="Selengut J."/>
            <person name="Davidsen T.M."/>
            <person name="Zafar N."/>
            <person name="White O."/>
            <person name="Tran B."/>
            <person name="Romero C."/>
            <person name="Forberger H.A."/>
            <person name="Weidman J.F."/>
            <person name="Khouri H.M."/>
            <person name="Feldblyum T.V."/>
            <person name="Utterback T.R."/>
            <person name="Van Aken S.E."/>
            <person name="Lovley D.R."/>
            <person name="Fraser C.M."/>
        </authorList>
    </citation>
    <scope>NUCLEOTIDE SEQUENCE [LARGE SCALE GENOMIC DNA]</scope>
    <source>
        <strain>ATCC 51573 / DSM 12127 / PCA</strain>
    </source>
</reference>
<proteinExistence type="inferred from homology"/>
<accession>Q74GM3</accession>
<sequence length="270" mass="28622">MTRQDLVLFRPRLALLNGIAAVAGHALVPDAAHATLWVALAGVAILAAGGSALNQVLERDLDRLMERTRQRPLPRGDLSPAMATALGCACIGTGLLVLAAGGPVPPLLGAVALAWYLAVYTPLKRRTSLALAIGAVSGALPPVIGWTLAGGAPGDYRIILLAGIFFLWQVPHFWLFQRRHADDYRRAGIPLFTPGAGRLGPSFHVRLWLGALAASVLLLPAFGLMAPRMAPWIAAVPLLLLPVCRPRSEATLFSCLNAFPPLMALALLLR</sequence>
<gene>
    <name evidence="1" type="primary">ctaB</name>
    <name type="ordered locus">GSU0223</name>
</gene>
<keyword id="KW-0997">Cell inner membrane</keyword>
<keyword id="KW-1003">Cell membrane</keyword>
<keyword id="KW-0350">Heme biosynthesis</keyword>
<keyword id="KW-0472">Membrane</keyword>
<keyword id="KW-1185">Reference proteome</keyword>
<keyword id="KW-0808">Transferase</keyword>
<keyword id="KW-0812">Transmembrane</keyword>
<keyword id="KW-1133">Transmembrane helix</keyword>
<comment type="function">
    <text evidence="1">Converts heme B (protoheme IX) to heme O by substitution of the vinyl group on carbon 2 of heme B porphyrin ring with a hydroxyethyl farnesyl side group.</text>
</comment>
<comment type="catalytic activity">
    <reaction evidence="1">
        <text>heme b + (2E,6E)-farnesyl diphosphate + H2O = Fe(II)-heme o + diphosphate</text>
        <dbReference type="Rhea" id="RHEA:28070"/>
        <dbReference type="ChEBI" id="CHEBI:15377"/>
        <dbReference type="ChEBI" id="CHEBI:33019"/>
        <dbReference type="ChEBI" id="CHEBI:60344"/>
        <dbReference type="ChEBI" id="CHEBI:60530"/>
        <dbReference type="ChEBI" id="CHEBI:175763"/>
        <dbReference type="EC" id="2.5.1.141"/>
    </reaction>
</comment>
<comment type="pathway">
    <text evidence="1">Porphyrin-containing compound metabolism; heme O biosynthesis; heme O from protoheme: step 1/1.</text>
</comment>
<comment type="subcellular location">
    <subcellularLocation>
        <location evidence="1">Cell inner membrane</location>
        <topology evidence="1">Multi-pass membrane protein</topology>
    </subcellularLocation>
</comment>
<comment type="miscellaneous">
    <text evidence="1">Carbon 2 of the heme B porphyrin ring is defined according to the Fischer nomenclature.</text>
</comment>
<comment type="similarity">
    <text evidence="1">Belongs to the UbiA prenyltransferase family. Protoheme IX farnesyltransferase subfamily.</text>
</comment>
<organism>
    <name type="scientific">Geobacter sulfurreducens (strain ATCC 51573 / DSM 12127 / PCA)</name>
    <dbReference type="NCBI Taxonomy" id="243231"/>
    <lineage>
        <taxon>Bacteria</taxon>
        <taxon>Pseudomonadati</taxon>
        <taxon>Thermodesulfobacteriota</taxon>
        <taxon>Desulfuromonadia</taxon>
        <taxon>Geobacterales</taxon>
        <taxon>Geobacteraceae</taxon>
        <taxon>Geobacter</taxon>
    </lineage>
</organism>
<evidence type="ECO:0000255" key="1">
    <source>
        <dbReference type="HAMAP-Rule" id="MF_00154"/>
    </source>
</evidence>
<dbReference type="EC" id="2.5.1.141" evidence="1"/>
<dbReference type="EMBL" id="AE017180">
    <property type="protein sequence ID" value="AAR33557.1"/>
    <property type="molecule type" value="Genomic_DNA"/>
</dbReference>
<dbReference type="RefSeq" id="NP_951284.1">
    <property type="nucleotide sequence ID" value="NC_002939.5"/>
</dbReference>
<dbReference type="RefSeq" id="WP_010940898.1">
    <property type="nucleotide sequence ID" value="NC_002939.5"/>
</dbReference>
<dbReference type="SMR" id="Q74GM3"/>
<dbReference type="FunCoup" id="Q74GM3">
    <property type="interactions" value="394"/>
</dbReference>
<dbReference type="STRING" id="243231.GSU0223"/>
<dbReference type="EnsemblBacteria" id="AAR33557">
    <property type="protein sequence ID" value="AAR33557"/>
    <property type="gene ID" value="GSU0223"/>
</dbReference>
<dbReference type="KEGG" id="gsu:GSU0223"/>
<dbReference type="PATRIC" id="fig|243231.5.peg.223"/>
<dbReference type="eggNOG" id="COG0109">
    <property type="taxonomic scope" value="Bacteria"/>
</dbReference>
<dbReference type="HOGENOM" id="CLU_029631_3_1_7"/>
<dbReference type="InParanoid" id="Q74GM3"/>
<dbReference type="OrthoDB" id="9814417at2"/>
<dbReference type="UniPathway" id="UPA00834">
    <property type="reaction ID" value="UER00712"/>
</dbReference>
<dbReference type="Proteomes" id="UP000000577">
    <property type="component" value="Chromosome"/>
</dbReference>
<dbReference type="GO" id="GO:0005886">
    <property type="term" value="C:plasma membrane"/>
    <property type="evidence" value="ECO:0007669"/>
    <property type="project" value="UniProtKB-SubCell"/>
</dbReference>
<dbReference type="GO" id="GO:0008495">
    <property type="term" value="F:protoheme IX farnesyltransferase activity"/>
    <property type="evidence" value="ECO:0000318"/>
    <property type="project" value="GO_Central"/>
</dbReference>
<dbReference type="GO" id="GO:0006783">
    <property type="term" value="P:heme biosynthetic process"/>
    <property type="evidence" value="ECO:0000318"/>
    <property type="project" value="GO_Central"/>
</dbReference>
<dbReference type="GO" id="GO:0048034">
    <property type="term" value="P:heme O biosynthetic process"/>
    <property type="evidence" value="ECO:0007669"/>
    <property type="project" value="UniProtKB-UniRule"/>
</dbReference>
<dbReference type="CDD" id="cd13957">
    <property type="entry name" value="PT_UbiA_Cox10"/>
    <property type="match status" value="1"/>
</dbReference>
<dbReference type="Gene3D" id="1.10.357.140">
    <property type="entry name" value="UbiA prenyltransferase"/>
    <property type="match status" value="1"/>
</dbReference>
<dbReference type="HAMAP" id="MF_00154">
    <property type="entry name" value="CyoE_CtaB"/>
    <property type="match status" value="1"/>
</dbReference>
<dbReference type="InterPro" id="IPR006369">
    <property type="entry name" value="Protohaem_IX_farnesylTrfase"/>
</dbReference>
<dbReference type="InterPro" id="IPR000537">
    <property type="entry name" value="UbiA_prenyltransferase"/>
</dbReference>
<dbReference type="InterPro" id="IPR030470">
    <property type="entry name" value="UbiA_prenylTrfase_CS"/>
</dbReference>
<dbReference type="InterPro" id="IPR044878">
    <property type="entry name" value="UbiA_sf"/>
</dbReference>
<dbReference type="PANTHER" id="PTHR43448:SF7">
    <property type="entry name" value="4-HYDROXYBENZOATE SOLANESYLTRANSFERASE"/>
    <property type="match status" value="1"/>
</dbReference>
<dbReference type="PANTHER" id="PTHR43448">
    <property type="entry name" value="PROTOHEME IX FARNESYLTRANSFERASE, MITOCHONDRIAL"/>
    <property type="match status" value="1"/>
</dbReference>
<dbReference type="Pfam" id="PF01040">
    <property type="entry name" value="UbiA"/>
    <property type="match status" value="1"/>
</dbReference>
<dbReference type="PROSITE" id="PS00943">
    <property type="entry name" value="UBIA"/>
    <property type="match status" value="1"/>
</dbReference>
<feature type="chain" id="PRO_0000346048" description="Protoheme IX farnesyltransferase">
    <location>
        <begin position="1"/>
        <end position="270"/>
    </location>
</feature>
<feature type="transmembrane region" description="Helical" evidence="1">
    <location>
        <begin position="13"/>
        <end position="30"/>
    </location>
</feature>
<feature type="transmembrane region" description="Helical" evidence="1">
    <location>
        <begin position="33"/>
        <end position="53"/>
    </location>
</feature>
<feature type="transmembrane region" description="Helical" evidence="1">
    <location>
        <begin position="95"/>
        <end position="115"/>
    </location>
</feature>
<feature type="transmembrane region" description="Helical" evidence="1">
    <location>
        <begin position="129"/>
        <end position="149"/>
    </location>
</feature>
<feature type="transmembrane region" description="Helical" evidence="1">
    <location>
        <begin position="156"/>
        <end position="176"/>
    </location>
</feature>
<feature type="transmembrane region" description="Helical" evidence="1">
    <location>
        <begin position="207"/>
        <end position="227"/>
    </location>
</feature>
<feature type="transmembrane region" description="Helical" evidence="1">
    <location>
        <begin position="249"/>
        <end position="269"/>
    </location>
</feature>